<protein>
    <recommendedName>
        <fullName>Ephrin type-A receptor 4</fullName>
        <ecNumber>2.7.10.1</ecNumber>
    </recommendedName>
    <alternativeName>
        <fullName>EPH-like kinase 8</fullName>
        <shortName>EK8</shortName>
        <shortName>cEK8</shortName>
    </alternativeName>
</protein>
<dbReference type="EC" id="2.7.10.1"/>
<dbReference type="EMBL" id="D38174">
    <property type="protein sequence ID" value="BAA07373.1"/>
    <property type="molecule type" value="mRNA"/>
</dbReference>
<dbReference type="EMBL" id="Z19059">
    <property type="protein sequence ID" value="CAA79509.1"/>
    <property type="molecule type" value="mRNA"/>
</dbReference>
<dbReference type="PIR" id="I50617">
    <property type="entry name" value="I50617"/>
</dbReference>
<dbReference type="RefSeq" id="NP_990112.1">
    <property type="nucleotide sequence ID" value="NM_204781.2"/>
</dbReference>
<dbReference type="SMR" id="Q07496"/>
<dbReference type="BioGRID" id="675840">
    <property type="interactions" value="1"/>
</dbReference>
<dbReference type="FunCoup" id="Q07496">
    <property type="interactions" value="244"/>
</dbReference>
<dbReference type="STRING" id="9031.ENSGALP00000008426"/>
<dbReference type="GlyCosmos" id="Q07496">
    <property type="glycosylation" value="3 sites, No reported glycans"/>
</dbReference>
<dbReference type="GlyGen" id="Q07496">
    <property type="glycosylation" value="3 sites"/>
</dbReference>
<dbReference type="PaxDb" id="9031-ENSGALP00000008426"/>
<dbReference type="GeneID" id="395559"/>
<dbReference type="KEGG" id="gga:395559"/>
<dbReference type="CTD" id="2043"/>
<dbReference type="VEuPathDB" id="HostDB:geneid_395559"/>
<dbReference type="eggNOG" id="KOG0196">
    <property type="taxonomic scope" value="Eukaryota"/>
</dbReference>
<dbReference type="HOGENOM" id="CLU_000288_141_1_1"/>
<dbReference type="InParanoid" id="Q07496"/>
<dbReference type="OrthoDB" id="4062651at2759"/>
<dbReference type="PhylomeDB" id="Q07496"/>
<dbReference type="TreeFam" id="TF315608"/>
<dbReference type="BRENDA" id="2.7.10.1">
    <property type="organism ID" value="1306"/>
</dbReference>
<dbReference type="Reactome" id="R-GGA-2682334">
    <property type="pathway name" value="EPH-Ephrin signaling"/>
</dbReference>
<dbReference type="Reactome" id="R-GGA-3928663">
    <property type="pathway name" value="EPHA-mediated growth cone collapse"/>
</dbReference>
<dbReference type="Reactome" id="R-GGA-3928665">
    <property type="pathway name" value="EPH-ephrin mediated repulsion of cells"/>
</dbReference>
<dbReference type="PRO" id="PR:Q07496"/>
<dbReference type="Proteomes" id="UP000000539">
    <property type="component" value="Chromosome 9"/>
</dbReference>
<dbReference type="Bgee" id="ENSGALG00000005256">
    <property type="expression patterns" value="Expressed in testis and 14 other cell types or tissues"/>
</dbReference>
<dbReference type="GO" id="GO:0005737">
    <property type="term" value="C:cytoplasm"/>
    <property type="evidence" value="ECO:0000250"/>
    <property type="project" value="UniProtKB"/>
</dbReference>
<dbReference type="GO" id="GO:0030425">
    <property type="term" value="C:dendrite"/>
    <property type="evidence" value="ECO:0000318"/>
    <property type="project" value="GO_Central"/>
</dbReference>
<dbReference type="GO" id="GO:0031901">
    <property type="term" value="C:early endosome membrane"/>
    <property type="evidence" value="ECO:0000250"/>
    <property type="project" value="UniProtKB"/>
</dbReference>
<dbReference type="GO" id="GO:0005886">
    <property type="term" value="C:plasma membrane"/>
    <property type="evidence" value="ECO:0000250"/>
    <property type="project" value="UniProtKB"/>
</dbReference>
<dbReference type="GO" id="GO:0005524">
    <property type="term" value="F:ATP binding"/>
    <property type="evidence" value="ECO:0007669"/>
    <property type="project" value="UniProtKB-KW"/>
</dbReference>
<dbReference type="GO" id="GO:0097161">
    <property type="term" value="F:DH domain binding"/>
    <property type="evidence" value="ECO:0000250"/>
    <property type="project" value="UniProtKB"/>
</dbReference>
<dbReference type="GO" id="GO:0005004">
    <property type="term" value="F:GPI-linked ephrin receptor activity"/>
    <property type="evidence" value="ECO:0000250"/>
    <property type="project" value="UniProtKB"/>
</dbReference>
<dbReference type="GO" id="GO:0004672">
    <property type="term" value="F:protein kinase activity"/>
    <property type="evidence" value="ECO:0000250"/>
    <property type="project" value="UniProtKB"/>
</dbReference>
<dbReference type="GO" id="GO:0005005">
    <property type="term" value="F:transmembrane-ephrin receptor activity"/>
    <property type="evidence" value="ECO:0000250"/>
    <property type="project" value="UniProtKB"/>
</dbReference>
<dbReference type="GO" id="GO:0007411">
    <property type="term" value="P:axon guidance"/>
    <property type="evidence" value="ECO:0000318"/>
    <property type="project" value="GO_Central"/>
</dbReference>
<dbReference type="GO" id="GO:0007155">
    <property type="term" value="P:cell adhesion"/>
    <property type="evidence" value="ECO:0007669"/>
    <property type="project" value="UniProtKB-KW"/>
</dbReference>
<dbReference type="GO" id="GO:0048013">
    <property type="term" value="P:ephrin receptor signaling pathway"/>
    <property type="evidence" value="ECO:0000318"/>
    <property type="project" value="GO_Central"/>
</dbReference>
<dbReference type="GO" id="GO:0097155">
    <property type="term" value="P:fasciculation of sensory neuron axon"/>
    <property type="evidence" value="ECO:0000250"/>
    <property type="project" value="UniProtKB"/>
</dbReference>
<dbReference type="GO" id="GO:0018108">
    <property type="term" value="P:peptidyl-tyrosine phosphorylation"/>
    <property type="evidence" value="ECO:0000250"/>
    <property type="project" value="UniProtKB"/>
</dbReference>
<dbReference type="GO" id="GO:2001108">
    <property type="term" value="P:positive regulation of Rho guanyl-nucleotide exchange factor activity"/>
    <property type="evidence" value="ECO:0000250"/>
    <property type="project" value="UniProtKB"/>
</dbReference>
<dbReference type="GO" id="GO:0046777">
    <property type="term" value="P:protein autophosphorylation"/>
    <property type="evidence" value="ECO:0000250"/>
    <property type="project" value="UniProtKB"/>
</dbReference>
<dbReference type="GO" id="GO:0043087">
    <property type="term" value="P:regulation of GTPase activity"/>
    <property type="evidence" value="ECO:0000250"/>
    <property type="project" value="UniProtKB"/>
</dbReference>
<dbReference type="GO" id="GO:0035282">
    <property type="term" value="P:segmentation"/>
    <property type="evidence" value="ECO:0000303"/>
    <property type="project" value="AgBase"/>
</dbReference>
<dbReference type="GO" id="GO:0001756">
    <property type="term" value="P:somitogenesis"/>
    <property type="evidence" value="ECO:0000303"/>
    <property type="project" value="AgBase"/>
</dbReference>
<dbReference type="CDD" id="cd10482">
    <property type="entry name" value="EphR_LBD_A4"/>
    <property type="match status" value="1"/>
</dbReference>
<dbReference type="CDD" id="cd00063">
    <property type="entry name" value="FN3"/>
    <property type="match status" value="2"/>
</dbReference>
<dbReference type="CDD" id="cd05066">
    <property type="entry name" value="PTKc_EphR_A"/>
    <property type="match status" value="1"/>
</dbReference>
<dbReference type="CDD" id="cd09545">
    <property type="entry name" value="SAM_EPH-A4"/>
    <property type="match status" value="1"/>
</dbReference>
<dbReference type="FunFam" id="2.60.40.10:FF:000041">
    <property type="entry name" value="ephrin type-A receptor 3"/>
    <property type="match status" value="1"/>
</dbReference>
<dbReference type="FunFam" id="1.10.150.50:FF:000001">
    <property type="entry name" value="Ephrin type-A receptor 5"/>
    <property type="match status" value="1"/>
</dbReference>
<dbReference type="FunFam" id="1.10.510.10:FF:000019">
    <property type="entry name" value="Ephrin type-A receptor 5"/>
    <property type="match status" value="1"/>
</dbReference>
<dbReference type="FunFam" id="2.10.50.10:FF:000001">
    <property type="entry name" value="Ephrin type-A receptor 5"/>
    <property type="match status" value="1"/>
</dbReference>
<dbReference type="FunFam" id="2.60.40.10:FF:000045">
    <property type="entry name" value="Ephrin type-A receptor 5"/>
    <property type="match status" value="1"/>
</dbReference>
<dbReference type="FunFam" id="2.60.40.1770:FF:000001">
    <property type="entry name" value="Ephrin type-A receptor 5"/>
    <property type="match status" value="1"/>
</dbReference>
<dbReference type="FunFam" id="3.30.200.20:FF:000001">
    <property type="entry name" value="Ephrin type-A receptor 5"/>
    <property type="match status" value="1"/>
</dbReference>
<dbReference type="FunFam" id="2.60.120.260:FF:000001">
    <property type="entry name" value="Ephrin type-A receptor 7"/>
    <property type="match status" value="1"/>
</dbReference>
<dbReference type="Gene3D" id="2.60.40.1770">
    <property type="entry name" value="ephrin a2 ectodomain"/>
    <property type="match status" value="1"/>
</dbReference>
<dbReference type="Gene3D" id="2.60.120.260">
    <property type="entry name" value="Galactose-binding domain-like"/>
    <property type="match status" value="1"/>
</dbReference>
<dbReference type="Gene3D" id="2.60.40.10">
    <property type="entry name" value="Immunoglobulins"/>
    <property type="match status" value="2"/>
</dbReference>
<dbReference type="Gene3D" id="3.30.200.20">
    <property type="entry name" value="Phosphorylase Kinase, domain 1"/>
    <property type="match status" value="1"/>
</dbReference>
<dbReference type="Gene3D" id="1.10.150.50">
    <property type="entry name" value="Transcription Factor, Ets-1"/>
    <property type="match status" value="1"/>
</dbReference>
<dbReference type="Gene3D" id="1.10.510.10">
    <property type="entry name" value="Transferase(Phosphotransferase) domain 1"/>
    <property type="match status" value="1"/>
</dbReference>
<dbReference type="Gene3D" id="2.10.50.10">
    <property type="entry name" value="Tumor Necrosis Factor Receptor, subunit A, domain 2"/>
    <property type="match status" value="1"/>
</dbReference>
<dbReference type="InterPro" id="IPR027936">
    <property type="entry name" value="Eph_TM"/>
</dbReference>
<dbReference type="InterPro" id="IPR034270">
    <property type="entry name" value="EphA4_rcpt_lig-bd"/>
</dbReference>
<dbReference type="InterPro" id="IPR030602">
    <property type="entry name" value="EphA4_SAM"/>
</dbReference>
<dbReference type="InterPro" id="IPR001090">
    <property type="entry name" value="Ephrin_rcpt_lig-bd_dom"/>
</dbReference>
<dbReference type="InterPro" id="IPR050449">
    <property type="entry name" value="Ephrin_rcpt_TKs"/>
</dbReference>
<dbReference type="InterPro" id="IPR003961">
    <property type="entry name" value="FN3_dom"/>
</dbReference>
<dbReference type="InterPro" id="IPR036116">
    <property type="entry name" value="FN3_sf"/>
</dbReference>
<dbReference type="InterPro" id="IPR008979">
    <property type="entry name" value="Galactose-bd-like_sf"/>
</dbReference>
<dbReference type="InterPro" id="IPR009030">
    <property type="entry name" value="Growth_fac_rcpt_cys_sf"/>
</dbReference>
<dbReference type="InterPro" id="IPR013783">
    <property type="entry name" value="Ig-like_fold"/>
</dbReference>
<dbReference type="InterPro" id="IPR011009">
    <property type="entry name" value="Kinase-like_dom_sf"/>
</dbReference>
<dbReference type="InterPro" id="IPR000719">
    <property type="entry name" value="Prot_kinase_dom"/>
</dbReference>
<dbReference type="InterPro" id="IPR017441">
    <property type="entry name" value="Protein_kinase_ATP_BS"/>
</dbReference>
<dbReference type="InterPro" id="IPR001660">
    <property type="entry name" value="SAM"/>
</dbReference>
<dbReference type="InterPro" id="IPR013761">
    <property type="entry name" value="SAM/pointed_sf"/>
</dbReference>
<dbReference type="InterPro" id="IPR001245">
    <property type="entry name" value="Ser-Thr/Tyr_kinase_cat_dom"/>
</dbReference>
<dbReference type="InterPro" id="IPR011641">
    <property type="entry name" value="Tyr-kin_ephrin_A/B_rcpt-like"/>
</dbReference>
<dbReference type="InterPro" id="IPR008266">
    <property type="entry name" value="Tyr_kinase_AS"/>
</dbReference>
<dbReference type="InterPro" id="IPR020635">
    <property type="entry name" value="Tyr_kinase_cat_dom"/>
</dbReference>
<dbReference type="InterPro" id="IPR016257">
    <property type="entry name" value="Tyr_kinase_ephrin_rcpt"/>
</dbReference>
<dbReference type="InterPro" id="IPR001426">
    <property type="entry name" value="Tyr_kinase_rcpt_V_CS"/>
</dbReference>
<dbReference type="PANTHER" id="PTHR46877">
    <property type="entry name" value="EPH RECEPTOR A5"/>
    <property type="match status" value="1"/>
</dbReference>
<dbReference type="PANTHER" id="PTHR46877:SF18">
    <property type="entry name" value="EPHRIN TYPE-A RECEPTOR 4"/>
    <property type="match status" value="1"/>
</dbReference>
<dbReference type="Pfam" id="PF14575">
    <property type="entry name" value="EphA2_TM"/>
    <property type="match status" value="1"/>
</dbReference>
<dbReference type="Pfam" id="PF01404">
    <property type="entry name" value="Ephrin_lbd"/>
    <property type="match status" value="1"/>
</dbReference>
<dbReference type="Pfam" id="PF07699">
    <property type="entry name" value="Ephrin_rec_like"/>
    <property type="match status" value="1"/>
</dbReference>
<dbReference type="Pfam" id="PF00041">
    <property type="entry name" value="fn3"/>
    <property type="match status" value="2"/>
</dbReference>
<dbReference type="Pfam" id="PF07714">
    <property type="entry name" value="PK_Tyr_Ser-Thr"/>
    <property type="match status" value="1"/>
</dbReference>
<dbReference type="Pfam" id="PF07647">
    <property type="entry name" value="SAM_2"/>
    <property type="match status" value="1"/>
</dbReference>
<dbReference type="PIRSF" id="PIRSF000666">
    <property type="entry name" value="TyrPK_ephrin_receptor"/>
    <property type="match status" value="1"/>
</dbReference>
<dbReference type="PRINTS" id="PR00014">
    <property type="entry name" value="FNTYPEIII"/>
</dbReference>
<dbReference type="PRINTS" id="PR00109">
    <property type="entry name" value="TYRKINASE"/>
</dbReference>
<dbReference type="SMART" id="SM00615">
    <property type="entry name" value="EPH_lbd"/>
    <property type="match status" value="1"/>
</dbReference>
<dbReference type="SMART" id="SM01411">
    <property type="entry name" value="Ephrin_rec_like"/>
    <property type="match status" value="1"/>
</dbReference>
<dbReference type="SMART" id="SM00060">
    <property type="entry name" value="FN3"/>
    <property type="match status" value="2"/>
</dbReference>
<dbReference type="SMART" id="SM00220">
    <property type="entry name" value="S_TKc"/>
    <property type="match status" value="1"/>
</dbReference>
<dbReference type="SMART" id="SM00454">
    <property type="entry name" value="SAM"/>
    <property type="match status" value="1"/>
</dbReference>
<dbReference type="SMART" id="SM00219">
    <property type="entry name" value="TyrKc"/>
    <property type="match status" value="1"/>
</dbReference>
<dbReference type="SUPFAM" id="SSF49265">
    <property type="entry name" value="Fibronectin type III"/>
    <property type="match status" value="1"/>
</dbReference>
<dbReference type="SUPFAM" id="SSF49785">
    <property type="entry name" value="Galactose-binding domain-like"/>
    <property type="match status" value="1"/>
</dbReference>
<dbReference type="SUPFAM" id="SSF57184">
    <property type="entry name" value="Growth factor receptor domain"/>
    <property type="match status" value="1"/>
</dbReference>
<dbReference type="SUPFAM" id="SSF56112">
    <property type="entry name" value="Protein kinase-like (PK-like)"/>
    <property type="match status" value="1"/>
</dbReference>
<dbReference type="SUPFAM" id="SSF47769">
    <property type="entry name" value="SAM/Pointed domain"/>
    <property type="match status" value="1"/>
</dbReference>
<dbReference type="PROSITE" id="PS01186">
    <property type="entry name" value="EGF_2"/>
    <property type="match status" value="1"/>
</dbReference>
<dbReference type="PROSITE" id="PS51550">
    <property type="entry name" value="EPH_LBD"/>
    <property type="match status" value="1"/>
</dbReference>
<dbReference type="PROSITE" id="PS50853">
    <property type="entry name" value="FN3"/>
    <property type="match status" value="2"/>
</dbReference>
<dbReference type="PROSITE" id="PS00107">
    <property type="entry name" value="PROTEIN_KINASE_ATP"/>
    <property type="match status" value="1"/>
</dbReference>
<dbReference type="PROSITE" id="PS50011">
    <property type="entry name" value="PROTEIN_KINASE_DOM"/>
    <property type="match status" value="1"/>
</dbReference>
<dbReference type="PROSITE" id="PS00109">
    <property type="entry name" value="PROTEIN_KINASE_TYR"/>
    <property type="match status" value="1"/>
</dbReference>
<dbReference type="PROSITE" id="PS00790">
    <property type="entry name" value="RECEPTOR_TYR_KIN_V_1"/>
    <property type="match status" value="1"/>
</dbReference>
<dbReference type="PROSITE" id="PS00791">
    <property type="entry name" value="RECEPTOR_TYR_KIN_V_2"/>
    <property type="match status" value="1"/>
</dbReference>
<dbReference type="PROSITE" id="PS50105">
    <property type="entry name" value="SAM_DOMAIN"/>
    <property type="match status" value="1"/>
</dbReference>
<keyword id="KW-0067">ATP-binding</keyword>
<keyword id="KW-0130">Cell adhesion</keyword>
<keyword id="KW-1003">Cell membrane</keyword>
<keyword id="KW-0217">Developmental protein</keyword>
<keyword id="KW-0967">Endosome</keyword>
<keyword id="KW-0325">Glycoprotein</keyword>
<keyword id="KW-0418">Kinase</keyword>
<keyword id="KW-0472">Membrane</keyword>
<keyword id="KW-0524">Neurogenesis</keyword>
<keyword id="KW-0547">Nucleotide-binding</keyword>
<keyword id="KW-0597">Phosphoprotein</keyword>
<keyword id="KW-0675">Receptor</keyword>
<keyword id="KW-1185">Reference proteome</keyword>
<keyword id="KW-0677">Repeat</keyword>
<keyword id="KW-0732">Signal</keyword>
<keyword id="KW-0808">Transferase</keyword>
<keyword id="KW-0812">Transmembrane</keyword>
<keyword id="KW-1133">Transmembrane helix</keyword>
<keyword id="KW-0829">Tyrosine-protein kinase</keyword>
<accession>Q07496</accession>
<accession>Q90772</accession>
<proteinExistence type="evidence at protein level"/>
<organism>
    <name type="scientific">Gallus gallus</name>
    <name type="common">Chicken</name>
    <dbReference type="NCBI Taxonomy" id="9031"/>
    <lineage>
        <taxon>Eukaryota</taxon>
        <taxon>Metazoa</taxon>
        <taxon>Chordata</taxon>
        <taxon>Craniata</taxon>
        <taxon>Vertebrata</taxon>
        <taxon>Euteleostomi</taxon>
        <taxon>Archelosauria</taxon>
        <taxon>Archosauria</taxon>
        <taxon>Dinosauria</taxon>
        <taxon>Saurischia</taxon>
        <taxon>Theropoda</taxon>
        <taxon>Coelurosauria</taxon>
        <taxon>Aves</taxon>
        <taxon>Neognathae</taxon>
        <taxon>Galloanserae</taxon>
        <taxon>Galliformes</taxon>
        <taxon>Phasianidae</taxon>
        <taxon>Phasianinae</taxon>
        <taxon>Gallus</taxon>
    </lineage>
</organism>
<sequence length="986" mass="109483">MAGVPVGALLPLLVGVCGAVTGSRVYPANEVTLLDSRSVQGELGWIASPLEGGWEEVSIMDEKNTPIRTYQVCNVMEPSQNNWLRTDWIPREGAQRVYIEIKFTLRDCNSLPGVMGTCKETFNLYYYESNNDKERFIRESQFAKIDTIAADESFTQVDIGDRIMKLNTEVRDVGPLSKKGFYLAFQDVGACIALVSVRVFYKKCPLTVRNLAQFPDTITGADTSSLVEVRGSCVNNSEEKDVPKMYCGADGEWLVPIGNCLCNAGYEERNGECQACKIGYYKALSTDVACAKCPPHSYSIWEGSTSCTCDRGFFRAENDAASMPCTRPPSAPQNLISNVNETSVNLEWSAPQNKGGRDDISYNVVCKRCGAGEPSHCRSCGSGVHFSPQQNGLKTTKVSITDLLAHTNYTFEVWAVNGVSKHNPSQDQAVSVTVTTNQAAPSPIALIQAKEITRHSVALAWLEPDRPNGVILEYEVKYYEKDQNERSYRIVKTASRNTDIKGLNPLTSYVFHVRARTAAGYGDFSGPFEFTTNTVPSPIIGDGTNPTVLLVSVAGSVVLVVILIAAFVISRRRSKYSKAKQEADEEKHLNQGVRTYVDPFTYEDPNQAVREFAKEIDASCIKIEKVIGVGEFGEVCSGRLKVPGKREICVAIKTLKAGYTDKQRRDFLSEASIMGQFDHPNIIHLEGVVTKCKPVMIITEYMENGSLDAFLRKNDGRFTVIQLVGMLRGIGSGMKYLSDMSYVHRDLAARNILVNSNLVCKVSDFGMSRVLEDDPEAAYTTRGGKIPIRWTAPEAIAYRKFTSASDVWSYGIVMWEVMSYGERPYWDMSNQDVIKAIEEGYRLPPPMDCPIALHQLMLDCWQKERSDRPKFGQIVNMLDKLIRNPNSLKRTGSESSRPSTALLDPSSPEFSAVVSVSDWLQAIKMERYKDNFTAAGYTTLEAVVHMNQDDLARIGITAITHQNKILSSVQAMRSQMQQMHGRMVPV</sequence>
<reference key="1">
    <citation type="journal article" date="1996" name="Mech. Dev.">
        <title>The receptor tyrosine kinase, Cek8, is transiently expressed on subtypes of motoneurons in the spinal cord during development.</title>
        <authorList>
            <person name="Ohta K."/>
            <person name="Nakamura M."/>
            <person name="Hirokawa K."/>
            <person name="Tanaka S."/>
            <person name="Iwama A."/>
            <person name="Suda T."/>
            <person name="Ando M."/>
            <person name="Tanaka H."/>
        </authorList>
    </citation>
    <scope>NUCLEOTIDE SEQUENCE [MRNA]</scope>
    <source>
        <tissue>Spinal cord</tissue>
    </source>
</reference>
<reference key="2">
    <citation type="journal article" date="1993" name="Oncogene">
        <title>Five novel avian Eph-related tyrosine kinases are differentially expressed.</title>
        <authorList>
            <person name="Sajjadi F.G."/>
            <person name="Pasquale E.B."/>
        </authorList>
    </citation>
    <scope>NUCLEOTIDE SEQUENCE [MRNA] OF 138-986</scope>
    <scope>TISSUE SPECIFICITY</scope>
    <source>
        <tissue>Embryo</tissue>
    </source>
</reference>
<reference key="3">
    <citation type="journal article" date="2007" name="J. Neurosci.">
        <title>The EphA4 receptor regulates neuronal morphology through SPAR-mediated inactivation of Rap GTPases.</title>
        <authorList>
            <person name="Richter M."/>
            <person name="Murai K.K."/>
            <person name="Bourgin C."/>
            <person name="Pak D.T."/>
            <person name="Pasquale E.B."/>
        </authorList>
    </citation>
    <scope>INTERACTION WITH SIPA1L1</scope>
</reference>
<feature type="signal peptide" evidence="3">
    <location>
        <begin position="1"/>
        <end position="19"/>
    </location>
</feature>
<feature type="chain" id="PRO_0000016809" description="Ephrin type-A receptor 4">
    <location>
        <begin position="20"/>
        <end position="986"/>
    </location>
</feature>
<feature type="topological domain" description="Extracellular" evidence="3">
    <location>
        <begin position="20"/>
        <end position="547"/>
    </location>
</feature>
<feature type="transmembrane region" description="Helical" evidence="3">
    <location>
        <begin position="548"/>
        <end position="569"/>
    </location>
</feature>
<feature type="topological domain" description="Cytoplasmic" evidence="3">
    <location>
        <begin position="570"/>
        <end position="986"/>
    </location>
</feature>
<feature type="domain" description="Eph LBD" evidence="7">
    <location>
        <begin position="30"/>
        <end position="209"/>
    </location>
</feature>
<feature type="domain" description="Fibronectin type-III 1" evidence="6">
    <location>
        <begin position="328"/>
        <end position="439"/>
    </location>
</feature>
<feature type="domain" description="Fibronectin type-III 2" evidence="6">
    <location>
        <begin position="440"/>
        <end position="537"/>
    </location>
</feature>
<feature type="domain" description="Protein kinase" evidence="4">
    <location>
        <begin position="621"/>
        <end position="882"/>
    </location>
</feature>
<feature type="domain" description="SAM" evidence="5">
    <location>
        <begin position="911"/>
        <end position="975"/>
    </location>
</feature>
<feature type="short sequence motif" description="PDZ-binding" evidence="3">
    <location>
        <begin position="984"/>
        <end position="986"/>
    </location>
</feature>
<feature type="active site" description="Proton acceptor" evidence="4 8">
    <location>
        <position position="746"/>
    </location>
</feature>
<feature type="binding site" evidence="4">
    <location>
        <begin position="627"/>
        <end position="635"/>
    </location>
    <ligand>
        <name>ATP</name>
        <dbReference type="ChEBI" id="CHEBI:30616"/>
    </ligand>
</feature>
<feature type="binding site" evidence="4">
    <location>
        <position position="653"/>
    </location>
    <ligand>
        <name>ATP</name>
        <dbReference type="ChEBI" id="CHEBI:30616"/>
    </ligand>
</feature>
<feature type="modified residue" description="Phosphotyrosine; by autocatalysis" evidence="1">
    <location>
        <position position="596"/>
    </location>
</feature>
<feature type="modified residue" description="Phosphotyrosine; by autocatalysis" evidence="1">
    <location>
        <position position="602"/>
    </location>
</feature>
<feature type="modified residue" description="Phosphotyrosine; by autocatalysis" evidence="3">
    <location>
        <position position="779"/>
    </location>
</feature>
<feature type="modified residue" description="Phosphotyrosine; by autocatalysis" evidence="3">
    <location>
        <position position="928"/>
    </location>
</feature>
<feature type="glycosylation site" description="N-linked (GlcNAc...) asparagine" evidence="3">
    <location>
        <position position="235"/>
    </location>
</feature>
<feature type="glycosylation site" description="N-linked (GlcNAc...) asparagine" evidence="3">
    <location>
        <position position="340"/>
    </location>
</feature>
<feature type="glycosylation site" description="N-linked (GlcNAc...) asparagine" evidence="3">
    <location>
        <position position="408"/>
    </location>
</feature>
<feature type="sequence conflict" description="In Ref. 2; CAA79509." evidence="11" ref="2">
    <original>R</original>
    <variation>G</variation>
    <location>
        <position position="138"/>
    </location>
</feature>
<feature type="sequence conflict" description="In Ref. 2; CAA79509." evidence="11" ref="2">
    <original>S</original>
    <variation>T</variation>
    <location>
        <position position="487"/>
    </location>
</feature>
<comment type="function">
    <text evidence="2">Receptor tyrosine kinase which binds membrane-bound ephrin family ligands residing on adjacent cells, leading to contact-dependent bidirectional signaling into neighboring cells. The signaling pathway downstream of the receptor is referred to as forward signaling while the signaling pathway downstream of the ephrin ligand is referred to as reverse signaling. Highly promiscuous, it has the unique property among Eph receptors to bind and to be physiologically activated by both GPI-anchored ephrin-A and transmembrane ephrin-B ligands including EFNA1 and EFNB3. Upon activation by ephrin ligands, modulates cell morphology and integrin-dependent cell adhesion through regulation of the Rac, Rap and Rho GTPases activity. Plays an important role in the development of the nervous system controlling different steps of axonal guidance including the establishment of the corticospinal projections (By similarity).</text>
</comment>
<comment type="catalytic activity">
    <reaction evidence="8">
        <text>L-tyrosyl-[protein] + ATP = O-phospho-L-tyrosyl-[protein] + ADP + H(+)</text>
        <dbReference type="Rhea" id="RHEA:10596"/>
        <dbReference type="Rhea" id="RHEA-COMP:10136"/>
        <dbReference type="Rhea" id="RHEA-COMP:20101"/>
        <dbReference type="ChEBI" id="CHEBI:15378"/>
        <dbReference type="ChEBI" id="CHEBI:30616"/>
        <dbReference type="ChEBI" id="CHEBI:46858"/>
        <dbReference type="ChEBI" id="CHEBI:61978"/>
        <dbReference type="ChEBI" id="CHEBI:456216"/>
        <dbReference type="EC" id="2.7.10.1"/>
    </reaction>
</comment>
<comment type="subunit">
    <text evidence="2 9">Interacts with the src family kinase, p59-Fyn, through the major phosphorylation site at position Tyr-602 (By similarity). Interacts (via PDZ motif) with SIPA1L1 (via PDZ domain); controls neuronal morphology through regulation of the RAP1 (RAP1A or RAP1B) and RAP2 (RAP2A, RAP2B or RAP2C) GTPases.</text>
</comment>
<comment type="subcellular location">
    <subcellularLocation>
        <location evidence="2">Cell membrane</location>
        <topology evidence="2">Single-pass type I membrane protein</topology>
    </subcellularLocation>
    <subcellularLocation>
        <location evidence="2">Early endosome</location>
    </subcellularLocation>
    <text evidence="2">Clustered upon activation and targeted to early endosome.</text>
</comment>
<comment type="tissue specificity">
    <text evidence="10">Expressed at high levels in brain, with expression also detected in the kidney, lung, muscle and thymus.</text>
</comment>
<comment type="similarity">
    <text evidence="4">Belongs to the protein kinase superfamily. Tyr protein kinase family. Ephrin receptor subfamily.</text>
</comment>
<gene>
    <name type="primary">EPHA4</name>
    <name type="synonym">CEK8</name>
</gene>
<evidence type="ECO:0000250" key="1"/>
<evidence type="ECO:0000250" key="2">
    <source>
        <dbReference type="UniProtKB" id="Q03137"/>
    </source>
</evidence>
<evidence type="ECO:0000255" key="3"/>
<evidence type="ECO:0000255" key="4">
    <source>
        <dbReference type="PROSITE-ProRule" id="PRU00159"/>
    </source>
</evidence>
<evidence type="ECO:0000255" key="5">
    <source>
        <dbReference type="PROSITE-ProRule" id="PRU00184"/>
    </source>
</evidence>
<evidence type="ECO:0000255" key="6">
    <source>
        <dbReference type="PROSITE-ProRule" id="PRU00316"/>
    </source>
</evidence>
<evidence type="ECO:0000255" key="7">
    <source>
        <dbReference type="PROSITE-ProRule" id="PRU00883"/>
    </source>
</evidence>
<evidence type="ECO:0000255" key="8">
    <source>
        <dbReference type="PROSITE-ProRule" id="PRU10028"/>
    </source>
</evidence>
<evidence type="ECO:0000269" key="9">
    <source>
    </source>
</evidence>
<evidence type="ECO:0000269" key="10">
    <source>
    </source>
</evidence>
<evidence type="ECO:0000305" key="11"/>
<name>EPHA4_CHICK</name>